<organism>
    <name type="scientific">Salmonella gallinarum (strain 287/91 / NCTC 13346)</name>
    <dbReference type="NCBI Taxonomy" id="550538"/>
    <lineage>
        <taxon>Bacteria</taxon>
        <taxon>Pseudomonadati</taxon>
        <taxon>Pseudomonadota</taxon>
        <taxon>Gammaproteobacteria</taxon>
        <taxon>Enterobacterales</taxon>
        <taxon>Enterobacteriaceae</taxon>
        <taxon>Salmonella</taxon>
    </lineage>
</organism>
<gene>
    <name evidence="1" type="primary">pyrD</name>
    <name type="ordered locus">SG0948</name>
</gene>
<reference key="1">
    <citation type="journal article" date="2008" name="Genome Res.">
        <title>Comparative genome analysis of Salmonella enteritidis PT4 and Salmonella gallinarum 287/91 provides insights into evolutionary and host adaptation pathways.</title>
        <authorList>
            <person name="Thomson N.R."/>
            <person name="Clayton D.J."/>
            <person name="Windhorst D."/>
            <person name="Vernikos G."/>
            <person name="Davidson S."/>
            <person name="Churcher C."/>
            <person name="Quail M.A."/>
            <person name="Stevens M."/>
            <person name="Jones M.A."/>
            <person name="Watson M."/>
            <person name="Barron A."/>
            <person name="Layton A."/>
            <person name="Pickard D."/>
            <person name="Kingsley R.A."/>
            <person name="Bignell A."/>
            <person name="Clark L."/>
            <person name="Harris B."/>
            <person name="Ormond D."/>
            <person name="Abdellah Z."/>
            <person name="Brooks K."/>
            <person name="Cherevach I."/>
            <person name="Chillingworth T."/>
            <person name="Woodward J."/>
            <person name="Norberczak H."/>
            <person name="Lord A."/>
            <person name="Arrowsmith C."/>
            <person name="Jagels K."/>
            <person name="Moule S."/>
            <person name="Mungall K."/>
            <person name="Saunders M."/>
            <person name="Whitehead S."/>
            <person name="Chabalgoity J.A."/>
            <person name="Maskell D."/>
            <person name="Humphreys T."/>
            <person name="Roberts M."/>
            <person name="Barrow P.A."/>
            <person name="Dougan G."/>
            <person name="Parkhill J."/>
        </authorList>
    </citation>
    <scope>NUCLEOTIDE SEQUENCE [LARGE SCALE GENOMIC DNA]</scope>
    <source>
        <strain>287/91 / NCTC 13346</strain>
    </source>
</reference>
<proteinExistence type="inferred from homology"/>
<feature type="chain" id="PRO_1000100284" description="Dihydroorotate dehydrogenase (quinone)">
    <location>
        <begin position="1"/>
        <end position="336"/>
    </location>
</feature>
<feature type="active site" description="Nucleophile" evidence="1">
    <location>
        <position position="175"/>
    </location>
</feature>
<feature type="binding site" evidence="1">
    <location>
        <begin position="62"/>
        <end position="66"/>
    </location>
    <ligand>
        <name>FMN</name>
        <dbReference type="ChEBI" id="CHEBI:58210"/>
    </ligand>
</feature>
<feature type="binding site" evidence="1">
    <location>
        <position position="66"/>
    </location>
    <ligand>
        <name>substrate</name>
    </ligand>
</feature>
<feature type="binding site" evidence="1">
    <location>
        <position position="86"/>
    </location>
    <ligand>
        <name>FMN</name>
        <dbReference type="ChEBI" id="CHEBI:58210"/>
    </ligand>
</feature>
<feature type="binding site" evidence="1">
    <location>
        <begin position="111"/>
        <end position="115"/>
    </location>
    <ligand>
        <name>substrate</name>
    </ligand>
</feature>
<feature type="binding site" evidence="1">
    <location>
        <position position="139"/>
    </location>
    <ligand>
        <name>FMN</name>
        <dbReference type="ChEBI" id="CHEBI:58210"/>
    </ligand>
</feature>
<feature type="binding site" evidence="1">
    <location>
        <position position="172"/>
    </location>
    <ligand>
        <name>FMN</name>
        <dbReference type="ChEBI" id="CHEBI:58210"/>
    </ligand>
</feature>
<feature type="binding site" evidence="1">
    <location>
        <position position="172"/>
    </location>
    <ligand>
        <name>substrate</name>
    </ligand>
</feature>
<feature type="binding site" evidence="1">
    <location>
        <position position="177"/>
    </location>
    <ligand>
        <name>substrate</name>
    </ligand>
</feature>
<feature type="binding site" evidence="1">
    <location>
        <position position="217"/>
    </location>
    <ligand>
        <name>FMN</name>
        <dbReference type="ChEBI" id="CHEBI:58210"/>
    </ligand>
</feature>
<feature type="binding site" evidence="1">
    <location>
        <position position="245"/>
    </location>
    <ligand>
        <name>FMN</name>
        <dbReference type="ChEBI" id="CHEBI:58210"/>
    </ligand>
</feature>
<feature type="binding site" evidence="1">
    <location>
        <begin position="246"/>
        <end position="247"/>
    </location>
    <ligand>
        <name>substrate</name>
    </ligand>
</feature>
<feature type="binding site" evidence="1">
    <location>
        <position position="268"/>
    </location>
    <ligand>
        <name>FMN</name>
        <dbReference type="ChEBI" id="CHEBI:58210"/>
    </ligand>
</feature>
<feature type="binding site" evidence="1">
    <location>
        <position position="297"/>
    </location>
    <ligand>
        <name>FMN</name>
        <dbReference type="ChEBI" id="CHEBI:58210"/>
    </ligand>
</feature>
<feature type="binding site" evidence="1">
    <location>
        <begin position="318"/>
        <end position="319"/>
    </location>
    <ligand>
        <name>FMN</name>
        <dbReference type="ChEBI" id="CHEBI:58210"/>
    </ligand>
</feature>
<accession>B5R8M3</accession>
<protein>
    <recommendedName>
        <fullName evidence="1">Dihydroorotate dehydrogenase (quinone)</fullName>
        <ecNumber evidence="1">1.3.5.2</ecNumber>
    </recommendedName>
    <alternativeName>
        <fullName evidence="1">DHOdehase</fullName>
        <shortName evidence="1">DHOD</shortName>
        <shortName evidence="1">DHODase</shortName>
    </alternativeName>
    <alternativeName>
        <fullName evidence="1">Dihydroorotate oxidase</fullName>
    </alternativeName>
</protein>
<dbReference type="EC" id="1.3.5.2" evidence="1"/>
<dbReference type="EMBL" id="AM933173">
    <property type="protein sequence ID" value="CAR36838.1"/>
    <property type="molecule type" value="Genomic_DNA"/>
</dbReference>
<dbReference type="RefSeq" id="WP_000291722.1">
    <property type="nucleotide sequence ID" value="NC_011274.1"/>
</dbReference>
<dbReference type="SMR" id="B5R8M3"/>
<dbReference type="KEGG" id="seg:SG0948"/>
<dbReference type="HOGENOM" id="CLU_013640_2_0_6"/>
<dbReference type="UniPathway" id="UPA00070">
    <property type="reaction ID" value="UER00946"/>
</dbReference>
<dbReference type="Proteomes" id="UP000008321">
    <property type="component" value="Chromosome"/>
</dbReference>
<dbReference type="GO" id="GO:0005737">
    <property type="term" value="C:cytoplasm"/>
    <property type="evidence" value="ECO:0007669"/>
    <property type="project" value="InterPro"/>
</dbReference>
<dbReference type="GO" id="GO:0005886">
    <property type="term" value="C:plasma membrane"/>
    <property type="evidence" value="ECO:0007669"/>
    <property type="project" value="UniProtKB-SubCell"/>
</dbReference>
<dbReference type="GO" id="GO:0106430">
    <property type="term" value="F:dihydroorotate dehydrogenase (quinone) activity"/>
    <property type="evidence" value="ECO:0007669"/>
    <property type="project" value="UniProtKB-EC"/>
</dbReference>
<dbReference type="GO" id="GO:0006207">
    <property type="term" value="P:'de novo' pyrimidine nucleobase biosynthetic process"/>
    <property type="evidence" value="ECO:0007669"/>
    <property type="project" value="InterPro"/>
</dbReference>
<dbReference type="GO" id="GO:0044205">
    <property type="term" value="P:'de novo' UMP biosynthetic process"/>
    <property type="evidence" value="ECO:0007669"/>
    <property type="project" value="UniProtKB-UniRule"/>
</dbReference>
<dbReference type="CDD" id="cd04738">
    <property type="entry name" value="DHOD_2_like"/>
    <property type="match status" value="1"/>
</dbReference>
<dbReference type="FunFam" id="3.20.20.70:FF:000028">
    <property type="entry name" value="Dihydroorotate dehydrogenase (quinone)"/>
    <property type="match status" value="1"/>
</dbReference>
<dbReference type="Gene3D" id="3.20.20.70">
    <property type="entry name" value="Aldolase class I"/>
    <property type="match status" value="1"/>
</dbReference>
<dbReference type="HAMAP" id="MF_00225">
    <property type="entry name" value="DHO_dh_type2"/>
    <property type="match status" value="1"/>
</dbReference>
<dbReference type="InterPro" id="IPR013785">
    <property type="entry name" value="Aldolase_TIM"/>
</dbReference>
<dbReference type="InterPro" id="IPR050074">
    <property type="entry name" value="DHO_dehydrogenase"/>
</dbReference>
<dbReference type="InterPro" id="IPR012135">
    <property type="entry name" value="Dihydroorotate_DH_1_2"/>
</dbReference>
<dbReference type="InterPro" id="IPR005719">
    <property type="entry name" value="Dihydroorotate_DH_2"/>
</dbReference>
<dbReference type="InterPro" id="IPR005720">
    <property type="entry name" value="Dihydroorotate_DH_cat"/>
</dbReference>
<dbReference type="InterPro" id="IPR001295">
    <property type="entry name" value="Dihydroorotate_DH_CS"/>
</dbReference>
<dbReference type="NCBIfam" id="NF003644">
    <property type="entry name" value="PRK05286.1-1"/>
    <property type="match status" value="1"/>
</dbReference>
<dbReference type="NCBIfam" id="NF003645">
    <property type="entry name" value="PRK05286.1-2"/>
    <property type="match status" value="1"/>
</dbReference>
<dbReference type="NCBIfam" id="NF003646">
    <property type="entry name" value="PRK05286.1-4"/>
    <property type="match status" value="1"/>
</dbReference>
<dbReference type="NCBIfam" id="NF003652">
    <property type="entry name" value="PRK05286.2-5"/>
    <property type="match status" value="1"/>
</dbReference>
<dbReference type="NCBIfam" id="TIGR01036">
    <property type="entry name" value="pyrD_sub2"/>
    <property type="match status" value="1"/>
</dbReference>
<dbReference type="PANTHER" id="PTHR48109:SF4">
    <property type="entry name" value="DIHYDROOROTATE DEHYDROGENASE (QUINONE), MITOCHONDRIAL"/>
    <property type="match status" value="1"/>
</dbReference>
<dbReference type="PANTHER" id="PTHR48109">
    <property type="entry name" value="DIHYDROOROTATE DEHYDROGENASE (QUINONE), MITOCHONDRIAL-RELATED"/>
    <property type="match status" value="1"/>
</dbReference>
<dbReference type="Pfam" id="PF01180">
    <property type="entry name" value="DHO_dh"/>
    <property type="match status" value="1"/>
</dbReference>
<dbReference type="PIRSF" id="PIRSF000164">
    <property type="entry name" value="DHO_oxidase"/>
    <property type="match status" value="1"/>
</dbReference>
<dbReference type="SUPFAM" id="SSF51395">
    <property type="entry name" value="FMN-linked oxidoreductases"/>
    <property type="match status" value="1"/>
</dbReference>
<dbReference type="PROSITE" id="PS00911">
    <property type="entry name" value="DHODEHASE_1"/>
    <property type="match status" value="1"/>
</dbReference>
<dbReference type="PROSITE" id="PS00912">
    <property type="entry name" value="DHODEHASE_2"/>
    <property type="match status" value="1"/>
</dbReference>
<evidence type="ECO:0000255" key="1">
    <source>
        <dbReference type="HAMAP-Rule" id="MF_00225"/>
    </source>
</evidence>
<sequence>MYYPFVRKALFQLDPERAHEFTFQQLRRITGTPLEALVRQKVPTKPVTCMGLTFKNPLGLAAGLDKDGECIDALGAMGFGSLEIGTVTPRPQPGNDKPRLFRLVDAEGLINRMGFNNLGVDNLVENVKKAHFDGILGINIGKNKDTPVENGKDDYLICMEKVYAYAGYIAINISSPNTPGLRTLQYGDALDDLLTAIKNKQNDLQAIHHKYVPVAVKIAPDLCEEELIQVADSLLRHNIDGVIATNTTLDRSLVQGMKNCQQTGGLSGRPLQLKSTEIIRRLSQELKGQLPIIGVGGIDSVIAAREKIAAGATLVQIYSGFIFKGPPLIEEIVTHI</sequence>
<name>PYRD_SALG2</name>
<comment type="function">
    <text evidence="1">Catalyzes the conversion of dihydroorotate to orotate with quinone as electron acceptor.</text>
</comment>
<comment type="catalytic activity">
    <reaction evidence="1">
        <text>(S)-dihydroorotate + a quinone = orotate + a quinol</text>
        <dbReference type="Rhea" id="RHEA:30187"/>
        <dbReference type="ChEBI" id="CHEBI:24646"/>
        <dbReference type="ChEBI" id="CHEBI:30839"/>
        <dbReference type="ChEBI" id="CHEBI:30864"/>
        <dbReference type="ChEBI" id="CHEBI:132124"/>
        <dbReference type="EC" id="1.3.5.2"/>
    </reaction>
</comment>
<comment type="cofactor">
    <cofactor evidence="1">
        <name>FMN</name>
        <dbReference type="ChEBI" id="CHEBI:58210"/>
    </cofactor>
    <text evidence="1">Binds 1 FMN per subunit.</text>
</comment>
<comment type="pathway">
    <text evidence="1">Pyrimidine metabolism; UMP biosynthesis via de novo pathway; orotate from (S)-dihydroorotate (quinone route): step 1/1.</text>
</comment>
<comment type="subunit">
    <text evidence="1">Monomer.</text>
</comment>
<comment type="subcellular location">
    <subcellularLocation>
        <location evidence="1">Cell membrane</location>
        <topology evidence="1">Peripheral membrane protein</topology>
    </subcellularLocation>
</comment>
<comment type="similarity">
    <text evidence="1">Belongs to the dihydroorotate dehydrogenase family. Type 2 subfamily.</text>
</comment>
<keyword id="KW-1003">Cell membrane</keyword>
<keyword id="KW-0285">Flavoprotein</keyword>
<keyword id="KW-0288">FMN</keyword>
<keyword id="KW-0472">Membrane</keyword>
<keyword id="KW-0560">Oxidoreductase</keyword>
<keyword id="KW-0665">Pyrimidine biosynthesis</keyword>